<name>CYSEP_PHAVU</name>
<reference key="1">
    <citation type="journal article" date="1992" name="Plant Mol. Biol.">
        <title>Nucleotide sequence of a gene for an endopeptidase (EP-C1) from Phaseolus vulgaris.</title>
        <authorList>
            <person name="Ogushi Y."/>
            <person name="Tanaka T."/>
            <person name="Yamauchi D."/>
            <person name="Minamikawa T."/>
        </authorList>
    </citation>
    <scope>NUCLEOTIDE SEQUENCE [GENOMIC DNA]</scope>
    <source>
        <strain>cv. Saxa</strain>
        <tissue>Seedling</tissue>
    </source>
</reference>
<reference key="2">
    <citation type="journal article" date="1991" name="Plant Mol. Biol.">
        <title>Nucleotide sequence of cDNA for an endopeptidase (EP-C1) from pods of maturing Phaseolus vulgaris fruits.</title>
        <authorList>
            <person name="Tanaka T."/>
            <person name="Yamauchi D."/>
            <person name="Minamikawa T."/>
        </authorList>
    </citation>
    <scope>NUCLEOTIDE SEQUENCE [MRNA] OF 2-362</scope>
    <source>
        <strain>cv. Goldstar</strain>
        <tissue>Fruit</tissue>
    </source>
</reference>
<proteinExistence type="evidence at transcript level"/>
<feature type="signal peptide" evidence="5">
    <location>
        <begin position="1"/>
        <end position="20"/>
    </location>
</feature>
<feature type="propeptide" id="PRO_0000026440" description="Activation peptide" evidence="1">
    <location>
        <begin position="21"/>
        <end position="131"/>
    </location>
</feature>
<feature type="chain" id="PRO_0000026441" description="Vignain">
    <location>
        <begin position="132"/>
        <end position="362"/>
    </location>
</feature>
<feature type="short sequence motif" description="Prevents secretion from ER" evidence="10">
    <location>
        <begin position="359"/>
        <end position="362"/>
    </location>
</feature>
<feature type="active site" evidence="7">
    <location>
        <position position="152"/>
    </location>
</feature>
<feature type="active site" evidence="8">
    <location>
        <position position="288"/>
    </location>
</feature>
<feature type="active site" evidence="9">
    <location>
        <position position="309"/>
    </location>
</feature>
<feature type="glycosylation site" description="N-linked (GlcNAc...) asparagine" evidence="6">
    <location>
        <position position="326"/>
    </location>
</feature>
<feature type="glycosylation site" description="N-linked (GlcNAc...) asparagine" evidence="6">
    <location>
        <position position="346"/>
    </location>
</feature>
<feature type="disulfide bond" evidence="2">
    <location>
        <begin position="149"/>
        <end position="191"/>
    </location>
</feature>
<feature type="disulfide bond" evidence="3">
    <location>
        <begin position="183"/>
        <end position="224"/>
    </location>
</feature>
<feature type="disulfide bond" evidence="3">
    <location>
        <begin position="282"/>
        <end position="334"/>
    </location>
</feature>
<feature type="sequence conflict" description="In Ref. 2; CAA40073." evidence="11" ref="2">
    <original>P</original>
    <variation>H</variation>
    <location>
        <position position="107"/>
    </location>
</feature>
<sequence>MATKKLLWVVLSFSLVLGVANSFDFHDKDLASEESLWDLYERWRSHHTVSRSLGEKHKRFNVFKANLMHVHNTNKMDKPYKLKLNKFADMTNHEFRSTYAGSKVNHPRMFRGTPHENGAFMYEKVVSVPPSVDWRKKGAVTDVKDQGQCGSCWAFSTVVAVEGINQIKTNKLVALSEQELVDCDKEENQGCNGGLMESAFEFIKQKGGITTESNYPYKAQEGTCDASKVNDLAVSIDGHENVPANDEDALLKAVANQPVSVAIDAGGSDFQFYSEGVFTGDCSTDLNHGVAIVGYGTTVDGTNYWIVRNSWGPEWGEHGYIRMQRNISKKEGLCGIAMLPSYPIKNSSDNPTGSFSSPKDEL</sequence>
<keyword id="KW-1015">Disulfide bond</keyword>
<keyword id="KW-0256">Endoplasmic reticulum</keyword>
<keyword id="KW-0325">Glycoprotein</keyword>
<keyword id="KW-0378">Hydrolase</keyword>
<keyword id="KW-0645">Protease</keyword>
<keyword id="KW-0732">Signal</keyword>
<keyword id="KW-0788">Thiol protease</keyword>
<keyword id="KW-0865">Zymogen</keyword>
<accession>P25803</accession>
<dbReference type="EC" id="3.4.22.-" evidence="4"/>
<dbReference type="EMBL" id="X63102">
    <property type="protein sequence ID" value="CAA44816.1"/>
    <property type="molecule type" value="Genomic_DNA"/>
</dbReference>
<dbReference type="EMBL" id="X56753">
    <property type="protein sequence ID" value="CAA40073.1"/>
    <property type="molecule type" value="mRNA"/>
</dbReference>
<dbReference type="PIR" id="S22502">
    <property type="entry name" value="S22502"/>
</dbReference>
<dbReference type="SMR" id="P25803"/>
<dbReference type="MEROPS" id="C01.010"/>
<dbReference type="MEROPS" id="I29.003"/>
<dbReference type="eggNOG" id="KOG1543">
    <property type="taxonomic scope" value="Eukaryota"/>
</dbReference>
<dbReference type="GO" id="GO:0005788">
    <property type="term" value="C:endoplasmic reticulum lumen"/>
    <property type="evidence" value="ECO:0007669"/>
    <property type="project" value="UniProtKB-SubCell"/>
</dbReference>
<dbReference type="GO" id="GO:0008234">
    <property type="term" value="F:cysteine-type peptidase activity"/>
    <property type="evidence" value="ECO:0007669"/>
    <property type="project" value="UniProtKB-KW"/>
</dbReference>
<dbReference type="GO" id="GO:0006508">
    <property type="term" value="P:proteolysis"/>
    <property type="evidence" value="ECO:0007669"/>
    <property type="project" value="UniProtKB-KW"/>
</dbReference>
<dbReference type="CDD" id="cd02248">
    <property type="entry name" value="Peptidase_C1A"/>
    <property type="match status" value="1"/>
</dbReference>
<dbReference type="FunFam" id="3.90.70.10:FF:000023">
    <property type="entry name" value="Senescence-specific cysteine protease SAG39"/>
    <property type="match status" value="1"/>
</dbReference>
<dbReference type="Gene3D" id="3.90.70.10">
    <property type="entry name" value="Cysteine proteinases"/>
    <property type="match status" value="1"/>
</dbReference>
<dbReference type="InterPro" id="IPR038765">
    <property type="entry name" value="Papain-like_cys_pep_sf"/>
</dbReference>
<dbReference type="InterPro" id="IPR025661">
    <property type="entry name" value="Pept_asp_AS"/>
</dbReference>
<dbReference type="InterPro" id="IPR000169">
    <property type="entry name" value="Pept_cys_AS"/>
</dbReference>
<dbReference type="InterPro" id="IPR025660">
    <property type="entry name" value="Pept_his_AS"/>
</dbReference>
<dbReference type="InterPro" id="IPR013128">
    <property type="entry name" value="Peptidase_C1A"/>
</dbReference>
<dbReference type="InterPro" id="IPR000668">
    <property type="entry name" value="Peptidase_C1A_C"/>
</dbReference>
<dbReference type="InterPro" id="IPR039417">
    <property type="entry name" value="Peptidase_C1A_papain-like"/>
</dbReference>
<dbReference type="InterPro" id="IPR013201">
    <property type="entry name" value="Prot_inhib_I29"/>
</dbReference>
<dbReference type="PANTHER" id="PTHR12411">
    <property type="entry name" value="CYSTEINE PROTEASE FAMILY C1-RELATED"/>
    <property type="match status" value="1"/>
</dbReference>
<dbReference type="Pfam" id="PF08246">
    <property type="entry name" value="Inhibitor_I29"/>
    <property type="match status" value="1"/>
</dbReference>
<dbReference type="Pfam" id="PF00112">
    <property type="entry name" value="Peptidase_C1"/>
    <property type="match status" value="1"/>
</dbReference>
<dbReference type="PRINTS" id="PR00705">
    <property type="entry name" value="PAPAIN"/>
</dbReference>
<dbReference type="SMART" id="SM00848">
    <property type="entry name" value="Inhibitor_I29"/>
    <property type="match status" value="1"/>
</dbReference>
<dbReference type="SMART" id="SM00645">
    <property type="entry name" value="Pept_C1"/>
    <property type="match status" value="1"/>
</dbReference>
<dbReference type="SUPFAM" id="SSF54001">
    <property type="entry name" value="Cysteine proteinases"/>
    <property type="match status" value="1"/>
</dbReference>
<dbReference type="PROSITE" id="PS00014">
    <property type="entry name" value="ER_TARGET"/>
    <property type="match status" value="1"/>
</dbReference>
<dbReference type="PROSITE" id="PS00640">
    <property type="entry name" value="THIOL_PROTEASE_ASN"/>
    <property type="match status" value="1"/>
</dbReference>
<dbReference type="PROSITE" id="PS00139">
    <property type="entry name" value="THIOL_PROTEASE_CYS"/>
    <property type="match status" value="1"/>
</dbReference>
<dbReference type="PROSITE" id="PS00639">
    <property type="entry name" value="THIOL_PROTEASE_HIS"/>
    <property type="match status" value="1"/>
</dbReference>
<organism>
    <name type="scientific">Phaseolus vulgaris</name>
    <name type="common">Kidney bean</name>
    <name type="synonym">French bean</name>
    <dbReference type="NCBI Taxonomy" id="3885"/>
    <lineage>
        <taxon>Eukaryota</taxon>
        <taxon>Viridiplantae</taxon>
        <taxon>Streptophyta</taxon>
        <taxon>Embryophyta</taxon>
        <taxon>Tracheophyta</taxon>
        <taxon>Spermatophyta</taxon>
        <taxon>Magnoliopsida</taxon>
        <taxon>eudicotyledons</taxon>
        <taxon>Gunneridae</taxon>
        <taxon>Pentapetalae</taxon>
        <taxon>rosids</taxon>
        <taxon>fabids</taxon>
        <taxon>Fabales</taxon>
        <taxon>Fabaceae</taxon>
        <taxon>Papilionoideae</taxon>
        <taxon>50 kb inversion clade</taxon>
        <taxon>NPAAA clade</taxon>
        <taxon>indigoferoid/millettioid clade</taxon>
        <taxon>Phaseoleae</taxon>
        <taxon>Phaseolus</taxon>
    </lineage>
</organism>
<comment type="function">
    <text>Thought to be involved in the hydrolysis of stored seed proteins.</text>
</comment>
<comment type="subunit">
    <text>Monomer.</text>
</comment>
<comment type="subcellular location">
    <subcellularLocation>
        <location>Endoplasmic reticulum lumen</location>
    </subcellularLocation>
</comment>
<comment type="similarity">
    <text evidence="7 8 9">Belongs to the peptidase C1 family.</text>
</comment>
<protein>
    <recommendedName>
        <fullName>Vignain</fullName>
        <ecNumber evidence="4">3.4.22.-</ecNumber>
    </recommendedName>
    <alternativeName>
        <fullName>Bean endopeptidase</fullName>
    </alternativeName>
    <alternativeName>
        <fullName>Cysteine proteinase EP-C1</fullName>
    </alternativeName>
</protein>
<evidence type="ECO:0000250" key="1">
    <source>
        <dbReference type="UniProtKB" id="P00785"/>
    </source>
</evidence>
<evidence type="ECO:0000250" key="2">
    <source>
        <dbReference type="UniProtKB" id="P07858"/>
    </source>
</evidence>
<evidence type="ECO:0000250" key="3">
    <source>
        <dbReference type="UniProtKB" id="P25250"/>
    </source>
</evidence>
<evidence type="ECO:0000250" key="4">
    <source>
        <dbReference type="UniProtKB" id="P80884"/>
    </source>
</evidence>
<evidence type="ECO:0000255" key="5"/>
<evidence type="ECO:0000255" key="6">
    <source>
        <dbReference type="PROSITE-ProRule" id="PRU00498"/>
    </source>
</evidence>
<evidence type="ECO:0000255" key="7">
    <source>
        <dbReference type="PROSITE-ProRule" id="PRU10088"/>
    </source>
</evidence>
<evidence type="ECO:0000255" key="8">
    <source>
        <dbReference type="PROSITE-ProRule" id="PRU10089"/>
    </source>
</evidence>
<evidence type="ECO:0000255" key="9">
    <source>
        <dbReference type="PROSITE-ProRule" id="PRU10090"/>
    </source>
</evidence>
<evidence type="ECO:0000255" key="10">
    <source>
        <dbReference type="PROSITE-ProRule" id="PRU10138"/>
    </source>
</evidence>
<evidence type="ECO:0000305" key="11"/>